<organism>
    <name type="scientific">Mastigamoeba balamuthi</name>
    <name type="common">Phreatamoeba balamuthi</name>
    <dbReference type="NCBI Taxonomy" id="108607"/>
    <lineage>
        <taxon>Eukaryota</taxon>
        <taxon>Amoebozoa</taxon>
        <taxon>Evosea</taxon>
        <taxon>Archamoebae</taxon>
        <taxon>Mastigamoebida</taxon>
        <taxon>Mastigamoebidae</taxon>
        <taxon>Mastigamoeba</taxon>
    </lineage>
</organism>
<name>H3_MASBA</name>
<accession>Q9U7D1</accession>
<sequence>MARTKQTARKSTGGKAPRKAVATKARKTAPPVGGVKKPHRFRPGTVALREIRRYQKSTELLIRKLPFQRLVREIAQDFKTDLRFQSAAIAALQEAAEAYLVGLFEDTNLCAIHAKRVTIMPKDIQLARRIRGERA</sequence>
<keyword id="KW-0158">Chromosome</keyword>
<keyword id="KW-0238">DNA-binding</keyword>
<keyword id="KW-0544">Nucleosome core</keyword>
<keyword id="KW-0539">Nucleus</keyword>
<dbReference type="EMBL" id="AF140033">
    <property type="protein sequence ID" value="AAF00588.1"/>
    <property type="molecule type" value="mRNA"/>
</dbReference>
<dbReference type="SMR" id="Q9U7D1"/>
<dbReference type="VEuPathDB" id="AmoebaDB:MBAL_001816"/>
<dbReference type="GO" id="GO:0000786">
    <property type="term" value="C:nucleosome"/>
    <property type="evidence" value="ECO:0007669"/>
    <property type="project" value="UniProtKB-KW"/>
</dbReference>
<dbReference type="GO" id="GO:0005634">
    <property type="term" value="C:nucleus"/>
    <property type="evidence" value="ECO:0007669"/>
    <property type="project" value="UniProtKB-SubCell"/>
</dbReference>
<dbReference type="GO" id="GO:0003677">
    <property type="term" value="F:DNA binding"/>
    <property type="evidence" value="ECO:0007669"/>
    <property type="project" value="UniProtKB-KW"/>
</dbReference>
<dbReference type="GO" id="GO:0046982">
    <property type="term" value="F:protein heterodimerization activity"/>
    <property type="evidence" value="ECO:0007669"/>
    <property type="project" value="InterPro"/>
</dbReference>
<dbReference type="GO" id="GO:0030527">
    <property type="term" value="F:structural constituent of chromatin"/>
    <property type="evidence" value="ECO:0007669"/>
    <property type="project" value="InterPro"/>
</dbReference>
<dbReference type="CDD" id="cd22911">
    <property type="entry name" value="HFD_H3"/>
    <property type="match status" value="1"/>
</dbReference>
<dbReference type="FunFam" id="1.10.20.10:FF:000001">
    <property type="entry name" value="Histone H3"/>
    <property type="match status" value="1"/>
</dbReference>
<dbReference type="Gene3D" id="1.10.20.10">
    <property type="entry name" value="Histone, subunit A"/>
    <property type="match status" value="1"/>
</dbReference>
<dbReference type="InterPro" id="IPR009072">
    <property type="entry name" value="Histone-fold"/>
</dbReference>
<dbReference type="InterPro" id="IPR007125">
    <property type="entry name" value="Histone_H2A/H2B/H3"/>
</dbReference>
<dbReference type="InterPro" id="IPR000164">
    <property type="entry name" value="Histone_H3/CENP-A"/>
</dbReference>
<dbReference type="PANTHER" id="PTHR11426">
    <property type="entry name" value="HISTONE H3"/>
    <property type="match status" value="1"/>
</dbReference>
<dbReference type="Pfam" id="PF00125">
    <property type="entry name" value="Histone"/>
    <property type="match status" value="1"/>
</dbReference>
<dbReference type="PRINTS" id="PR00622">
    <property type="entry name" value="HISTONEH3"/>
</dbReference>
<dbReference type="SMART" id="SM00428">
    <property type="entry name" value="H3"/>
    <property type="match status" value="1"/>
</dbReference>
<dbReference type="SUPFAM" id="SSF47113">
    <property type="entry name" value="Histone-fold"/>
    <property type="match status" value="1"/>
</dbReference>
<dbReference type="PROSITE" id="PS00959">
    <property type="entry name" value="HISTONE_H3_2"/>
    <property type="match status" value="1"/>
</dbReference>
<proteinExistence type="evidence at transcript level"/>
<evidence type="ECO:0000250" key="1"/>
<evidence type="ECO:0000256" key="2">
    <source>
        <dbReference type="SAM" id="MobiDB-lite"/>
    </source>
</evidence>
<evidence type="ECO:0000305" key="3"/>
<protein>
    <recommendedName>
        <fullName>Histone H3</fullName>
    </recommendedName>
</protein>
<comment type="function">
    <text>Core component of nucleosome. Nucleosomes wrap and compact DNA into chromatin, limiting DNA accessibility to the cellular machineries which require DNA as a template. Histones thereby play a central role in transcription regulation, DNA repair, DNA replication and chromosomal stability. DNA accessibility is regulated via a complex set of post-translational modifications of histones, also called histone code, and nucleosome remodeling.</text>
</comment>
<comment type="subunit">
    <text>The nucleosome is a histone octamer containing two molecules each of H2A, H2B, H3 and H4 assembled in one H3-H4 heterotetramer and two H2A-H2B heterodimers. The octamer wraps approximately 147 bp of DNA.</text>
</comment>
<comment type="subcellular location">
    <subcellularLocation>
        <location evidence="1">Nucleus</location>
    </subcellularLocation>
    <subcellularLocation>
        <location evidence="1">Chromosome</location>
    </subcellularLocation>
</comment>
<comment type="similarity">
    <text evidence="3">Belongs to the histone H3 family.</text>
</comment>
<feature type="chain" id="PRO_0000221305" description="Histone H3">
    <location>
        <begin position="1"/>
        <end position="135"/>
    </location>
</feature>
<feature type="region of interest" description="Disordered" evidence="2">
    <location>
        <begin position="1"/>
        <end position="40"/>
    </location>
</feature>
<feature type="compositionally biased region" description="Low complexity" evidence="2">
    <location>
        <begin position="19"/>
        <end position="31"/>
    </location>
</feature>
<reference key="1">
    <citation type="submission" date="1999-04" db="EMBL/GenBank/DDBJ databases">
        <title>Core histones from Phreatamoeba balamuthi.</title>
        <authorList>
            <person name="Wu G."/>
            <person name="Muller M."/>
        </authorList>
    </citation>
    <scope>NUCLEOTIDE SEQUENCE [MRNA]</scope>
    <source>
        <strain>ATCC 30984</strain>
    </source>
</reference>